<protein>
    <recommendedName>
        <fullName evidence="1">3-phosphoshikimate 1-carboxyvinyltransferase</fullName>
        <ecNumber evidence="1">2.5.1.19</ecNumber>
    </recommendedName>
    <alternativeName>
        <fullName evidence="1">5-enolpyruvylshikimate-3-phosphate synthase</fullName>
        <shortName evidence="1">EPSP synthase</shortName>
        <shortName evidence="1">EPSPS</shortName>
    </alternativeName>
</protein>
<evidence type="ECO:0000255" key="1">
    <source>
        <dbReference type="HAMAP-Rule" id="MF_00210"/>
    </source>
</evidence>
<evidence type="ECO:0000305" key="2"/>
<keyword id="KW-0028">Amino-acid biosynthesis</keyword>
<keyword id="KW-0057">Aromatic amino acid biosynthesis</keyword>
<keyword id="KW-0963">Cytoplasm</keyword>
<keyword id="KW-0808">Transferase</keyword>
<dbReference type="EC" id="2.5.1.19" evidence="1"/>
<dbReference type="EMBL" id="L05002">
    <property type="protein sequence ID" value="AAA21937.1"/>
    <property type="status" value="ALT_SEQ"/>
    <property type="molecule type" value="Genomic_DNA"/>
</dbReference>
<dbReference type="PIR" id="I39539">
    <property type="entry name" value="I39539"/>
</dbReference>
<dbReference type="STRING" id="1233098.GCA_000315855_03119"/>
<dbReference type="UniPathway" id="UPA00053">
    <property type="reaction ID" value="UER00089"/>
</dbReference>
<dbReference type="GO" id="GO:0005737">
    <property type="term" value="C:cytoplasm"/>
    <property type="evidence" value="ECO:0007669"/>
    <property type="project" value="UniProtKB-SubCell"/>
</dbReference>
<dbReference type="GO" id="GO:0003866">
    <property type="term" value="F:3-phosphoshikimate 1-carboxyvinyltransferase activity"/>
    <property type="evidence" value="ECO:0007669"/>
    <property type="project" value="UniProtKB-UniRule"/>
</dbReference>
<dbReference type="GO" id="GO:0008652">
    <property type="term" value="P:amino acid biosynthetic process"/>
    <property type="evidence" value="ECO:0007669"/>
    <property type="project" value="UniProtKB-KW"/>
</dbReference>
<dbReference type="GO" id="GO:0009073">
    <property type="term" value="P:aromatic amino acid family biosynthetic process"/>
    <property type="evidence" value="ECO:0007669"/>
    <property type="project" value="UniProtKB-KW"/>
</dbReference>
<dbReference type="GO" id="GO:0009423">
    <property type="term" value="P:chorismate biosynthetic process"/>
    <property type="evidence" value="ECO:0007669"/>
    <property type="project" value="UniProtKB-UniRule"/>
</dbReference>
<dbReference type="CDD" id="cd01556">
    <property type="entry name" value="EPSP_synthase"/>
    <property type="match status" value="1"/>
</dbReference>
<dbReference type="FunFam" id="3.65.10.10:FF:000003">
    <property type="entry name" value="3-phosphoshikimate 1-carboxyvinyltransferase"/>
    <property type="match status" value="1"/>
</dbReference>
<dbReference type="FunFam" id="3.65.10.10:FF:000004">
    <property type="entry name" value="3-phosphoshikimate 1-carboxyvinyltransferase"/>
    <property type="match status" value="1"/>
</dbReference>
<dbReference type="Gene3D" id="3.65.10.10">
    <property type="entry name" value="Enolpyruvate transferase domain"/>
    <property type="match status" value="2"/>
</dbReference>
<dbReference type="HAMAP" id="MF_00210">
    <property type="entry name" value="EPSP_synth"/>
    <property type="match status" value="1"/>
</dbReference>
<dbReference type="InterPro" id="IPR001986">
    <property type="entry name" value="Enolpyruvate_Tfrase_dom"/>
</dbReference>
<dbReference type="InterPro" id="IPR036968">
    <property type="entry name" value="Enolpyruvate_Tfrase_sf"/>
</dbReference>
<dbReference type="InterPro" id="IPR006264">
    <property type="entry name" value="EPSP_synthase"/>
</dbReference>
<dbReference type="InterPro" id="IPR023193">
    <property type="entry name" value="EPSP_synthase_CS"/>
</dbReference>
<dbReference type="InterPro" id="IPR013792">
    <property type="entry name" value="RNA3'P_cycl/enolpyr_Trfase_a/b"/>
</dbReference>
<dbReference type="NCBIfam" id="TIGR01356">
    <property type="entry name" value="aroA"/>
    <property type="match status" value="1"/>
</dbReference>
<dbReference type="PANTHER" id="PTHR21090">
    <property type="entry name" value="AROM/DEHYDROQUINATE SYNTHASE"/>
    <property type="match status" value="1"/>
</dbReference>
<dbReference type="PANTHER" id="PTHR21090:SF5">
    <property type="entry name" value="PENTAFUNCTIONAL AROM POLYPEPTIDE"/>
    <property type="match status" value="1"/>
</dbReference>
<dbReference type="Pfam" id="PF00275">
    <property type="entry name" value="EPSP_synthase"/>
    <property type="match status" value="1"/>
</dbReference>
<dbReference type="PIRSF" id="PIRSF000505">
    <property type="entry name" value="EPSPS"/>
    <property type="match status" value="1"/>
</dbReference>
<dbReference type="SUPFAM" id="SSF55205">
    <property type="entry name" value="EPT/RTPC-like"/>
    <property type="match status" value="1"/>
</dbReference>
<dbReference type="PROSITE" id="PS00104">
    <property type="entry name" value="EPSP_SYNTHASE_1"/>
    <property type="match status" value="1"/>
</dbReference>
<dbReference type="PROSITE" id="PS00885">
    <property type="entry name" value="EPSP_SYNTHASE_2"/>
    <property type="match status" value="1"/>
</dbReference>
<reference key="1">
    <citation type="journal article" date="1993" name="Infect. Immun.">
        <title>An aromatic-dependent mutant of the fish pathogen Aeromonas salmonicida is attenuated in fish and is effective as a live vaccine against the salmonid disease furunculosis.</title>
        <authorList>
            <person name="Vaughan L.M."/>
            <person name="Smith P.R."/>
            <person name="Foster T.J."/>
        </authorList>
    </citation>
    <scope>NUCLEOTIDE SEQUENCE [GENOMIC DNA]</scope>
</reference>
<gene>
    <name evidence="1" type="primary">aroA</name>
</gene>
<sequence length="427" mass="46152">MNSLRLEPISRVAGEVNLPGSKSVSNRALLLAALARGTTRLTNLLDSDDIRHMLAALTQLGVKYKLSADKTECTVHGLGRSFAVSAPVNLFLGNAGTAMRPLCAALCLGSGEYMLGGEPRMEERPIGHLVDCLALKGAHIQYLKKDGYPPLVVDAKGLWGGDVHVDGSVSSQFLTAFLMAAPAMAPVIPRIHIKGELVSKPYIDITLHIMNSSGVVIEHDNYKLFYIKGNQSIVSPGDFLVEGDASSASYFLAAGAIKGKVRVTGIGKHSIGDIHFADVLERMGARITWGDDFIEAEQGPLHGVDMDMNHIPDXAMTIAXVALFAEGPTSIRNIYNWRVKETDRLHAMATDVRKLGVSEEGDLHYITVTPPTQLKHAEIDTYKHHRIAMCFSLVALSDIAVTINDPGCTSKTFPDYFDKLASVSQAV</sequence>
<organism>
    <name type="scientific">Aeromonas salmonicida</name>
    <dbReference type="NCBI Taxonomy" id="645"/>
    <lineage>
        <taxon>Bacteria</taxon>
        <taxon>Pseudomonadati</taxon>
        <taxon>Pseudomonadota</taxon>
        <taxon>Gammaproteobacteria</taxon>
        <taxon>Aeromonadales</taxon>
        <taxon>Aeromonadaceae</taxon>
        <taxon>Aeromonas</taxon>
    </lineage>
</organism>
<feature type="chain" id="PRO_0000088214" description="3-phosphoshikimate 1-carboxyvinyltransferase">
    <location>
        <begin position="1"/>
        <end position="427"/>
    </location>
</feature>
<feature type="active site" description="Proton acceptor" evidence="1">
    <location>
        <position position="313"/>
    </location>
</feature>
<feature type="binding site" evidence="1">
    <location>
        <position position="22"/>
    </location>
    <ligand>
        <name>3-phosphoshikimate</name>
        <dbReference type="ChEBI" id="CHEBI:145989"/>
    </ligand>
</feature>
<feature type="binding site" evidence="1">
    <location>
        <position position="22"/>
    </location>
    <ligand>
        <name>phosphoenolpyruvate</name>
        <dbReference type="ChEBI" id="CHEBI:58702"/>
    </ligand>
</feature>
<feature type="binding site" evidence="1">
    <location>
        <position position="23"/>
    </location>
    <ligand>
        <name>3-phosphoshikimate</name>
        <dbReference type="ChEBI" id="CHEBI:145989"/>
    </ligand>
</feature>
<feature type="binding site" evidence="1">
    <location>
        <position position="27"/>
    </location>
    <ligand>
        <name>3-phosphoshikimate</name>
        <dbReference type="ChEBI" id="CHEBI:145989"/>
    </ligand>
</feature>
<feature type="binding site" evidence="1">
    <location>
        <position position="96"/>
    </location>
    <ligand>
        <name>phosphoenolpyruvate</name>
        <dbReference type="ChEBI" id="CHEBI:58702"/>
    </ligand>
</feature>
<feature type="binding site" evidence="1">
    <location>
        <position position="124"/>
    </location>
    <ligand>
        <name>phosphoenolpyruvate</name>
        <dbReference type="ChEBI" id="CHEBI:58702"/>
    </ligand>
</feature>
<feature type="binding site" evidence="1">
    <location>
        <position position="170"/>
    </location>
    <ligand>
        <name>3-phosphoshikimate</name>
        <dbReference type="ChEBI" id="CHEBI:145989"/>
    </ligand>
</feature>
<feature type="binding site" evidence="1">
    <location>
        <position position="171"/>
    </location>
    <ligand>
        <name>3-phosphoshikimate</name>
        <dbReference type="ChEBI" id="CHEBI:145989"/>
    </ligand>
</feature>
<feature type="binding site" evidence="1">
    <location>
        <position position="172"/>
    </location>
    <ligand>
        <name>3-phosphoshikimate</name>
        <dbReference type="ChEBI" id="CHEBI:145989"/>
    </ligand>
</feature>
<feature type="binding site" evidence="1">
    <location>
        <position position="172"/>
    </location>
    <ligand>
        <name>phosphoenolpyruvate</name>
        <dbReference type="ChEBI" id="CHEBI:58702"/>
    </ligand>
</feature>
<feature type="binding site" evidence="1">
    <location>
        <position position="199"/>
    </location>
    <ligand>
        <name>3-phosphoshikimate</name>
        <dbReference type="ChEBI" id="CHEBI:145989"/>
    </ligand>
</feature>
<feature type="binding site" evidence="1">
    <location>
        <position position="313"/>
    </location>
    <ligand>
        <name>3-phosphoshikimate</name>
        <dbReference type="ChEBI" id="CHEBI:145989"/>
    </ligand>
</feature>
<feature type="binding site" evidence="1">
    <location>
        <position position="336"/>
    </location>
    <ligand>
        <name>3-phosphoshikimate</name>
        <dbReference type="ChEBI" id="CHEBI:145989"/>
    </ligand>
</feature>
<feature type="binding site" evidence="1">
    <location>
        <position position="340"/>
    </location>
    <ligand>
        <name>3-phosphoshikimate</name>
        <dbReference type="ChEBI" id="CHEBI:145989"/>
    </ligand>
</feature>
<feature type="binding site" evidence="1">
    <location>
        <position position="344"/>
    </location>
    <ligand>
        <name>phosphoenolpyruvate</name>
        <dbReference type="ChEBI" id="CHEBI:58702"/>
    </ligand>
</feature>
<feature type="binding site" evidence="1">
    <location>
        <position position="386"/>
    </location>
    <ligand>
        <name>phosphoenolpyruvate</name>
        <dbReference type="ChEBI" id="CHEBI:58702"/>
    </ligand>
</feature>
<feature type="binding site" evidence="1">
    <location>
        <position position="411"/>
    </location>
    <ligand>
        <name>phosphoenolpyruvate</name>
        <dbReference type="ChEBI" id="CHEBI:58702"/>
    </ligand>
</feature>
<comment type="function">
    <text evidence="1">Catalyzes the transfer of the enolpyruvyl moiety of phosphoenolpyruvate (PEP) to the 5-hydroxyl of shikimate-3-phosphate (S3P) to produce enolpyruvyl shikimate-3-phosphate and inorganic phosphate.</text>
</comment>
<comment type="catalytic activity">
    <reaction evidence="1">
        <text>3-phosphoshikimate + phosphoenolpyruvate = 5-O-(1-carboxyvinyl)-3-phosphoshikimate + phosphate</text>
        <dbReference type="Rhea" id="RHEA:21256"/>
        <dbReference type="ChEBI" id="CHEBI:43474"/>
        <dbReference type="ChEBI" id="CHEBI:57701"/>
        <dbReference type="ChEBI" id="CHEBI:58702"/>
        <dbReference type="ChEBI" id="CHEBI:145989"/>
        <dbReference type="EC" id="2.5.1.19"/>
    </reaction>
    <physiologicalReaction direction="left-to-right" evidence="1">
        <dbReference type="Rhea" id="RHEA:21257"/>
    </physiologicalReaction>
</comment>
<comment type="pathway">
    <text evidence="1">Metabolic intermediate biosynthesis; chorismate biosynthesis; chorismate from D-erythrose 4-phosphate and phosphoenolpyruvate: step 6/7.</text>
</comment>
<comment type="subunit">
    <text evidence="1">Monomer.</text>
</comment>
<comment type="subcellular location">
    <subcellularLocation>
        <location evidence="1">Cytoplasm</location>
    </subcellularLocation>
</comment>
<comment type="similarity">
    <text evidence="1 2">Belongs to the EPSP synthase family.</text>
</comment>
<comment type="sequence caution" evidence="2">
    <conflict type="frameshift">
        <sequence resource="EMBL-CDS" id="AAA21937"/>
    </conflict>
</comment>
<accession>Q03321</accession>
<proteinExistence type="inferred from homology"/>
<name>AROA_AERSA</name>